<reference key="1">
    <citation type="journal article" date="2003" name="Nature">
        <title>Genome sequence of Bacillus cereus and comparative analysis with Bacillus anthracis.</title>
        <authorList>
            <person name="Ivanova N."/>
            <person name="Sorokin A."/>
            <person name="Anderson I."/>
            <person name="Galleron N."/>
            <person name="Candelon B."/>
            <person name="Kapatral V."/>
            <person name="Bhattacharyya A."/>
            <person name="Reznik G."/>
            <person name="Mikhailova N."/>
            <person name="Lapidus A."/>
            <person name="Chu L."/>
            <person name="Mazur M."/>
            <person name="Goltsman E."/>
            <person name="Larsen N."/>
            <person name="D'Souza M."/>
            <person name="Walunas T."/>
            <person name="Grechkin Y."/>
            <person name="Pusch G."/>
            <person name="Haselkorn R."/>
            <person name="Fonstein M."/>
            <person name="Ehrlich S.D."/>
            <person name="Overbeek R."/>
            <person name="Kyrpides N.C."/>
        </authorList>
    </citation>
    <scope>NUCLEOTIDE SEQUENCE [LARGE SCALE GENOMIC DNA]</scope>
    <source>
        <strain>ATCC 14579 / DSM 31 / CCUG 7414 / JCM 2152 / NBRC 15305 / NCIMB 9373 / NCTC 2599 / NRRL B-3711</strain>
    </source>
</reference>
<evidence type="ECO:0000255" key="1">
    <source>
        <dbReference type="HAMAP-Rule" id="MF_01315"/>
    </source>
</evidence>
<evidence type="ECO:0000256" key="2">
    <source>
        <dbReference type="SAM" id="MobiDB-lite"/>
    </source>
</evidence>
<evidence type="ECO:0000305" key="3"/>
<name>RS13_BACCR</name>
<protein>
    <recommendedName>
        <fullName evidence="1">Small ribosomal subunit protein uS13</fullName>
    </recommendedName>
    <alternativeName>
        <fullName evidence="3">30S ribosomal protein S13</fullName>
    </alternativeName>
</protein>
<sequence length="121" mass="13819">MARIAGVDIPRDKRVVISLTYVFGIGRTTAEKILAEAGISEETRVRDLTEDELGRIRDIIDRIKVEGDLRREVSLNIKRLMEIGSYRGLRHRRGLPVRGQNSKNNARTRKGPRRTVANKKK</sequence>
<gene>
    <name evidence="1" type="primary">rpsM</name>
    <name type="ordered locus">BC_0156</name>
</gene>
<comment type="function">
    <text evidence="1">Located at the top of the head of the 30S subunit, it contacts several helices of the 16S rRNA. In the 70S ribosome it contacts the 23S rRNA (bridge B1a) and protein L5 of the 50S subunit (bridge B1b), connecting the 2 subunits; these bridges are implicated in subunit movement. Contacts the tRNAs in the A and P-sites.</text>
</comment>
<comment type="subunit">
    <text evidence="1">Part of the 30S ribosomal subunit. Forms a loose heterodimer with protein S19. Forms two bridges to the 50S subunit in the 70S ribosome.</text>
</comment>
<comment type="similarity">
    <text evidence="1">Belongs to the universal ribosomal protein uS13 family.</text>
</comment>
<keyword id="KW-1185">Reference proteome</keyword>
<keyword id="KW-0687">Ribonucleoprotein</keyword>
<keyword id="KW-0689">Ribosomal protein</keyword>
<keyword id="KW-0694">RNA-binding</keyword>
<keyword id="KW-0699">rRNA-binding</keyword>
<keyword id="KW-0820">tRNA-binding</keyword>
<dbReference type="EMBL" id="AE016877">
    <property type="protein sequence ID" value="AAP07236.1"/>
    <property type="molecule type" value="Genomic_DNA"/>
</dbReference>
<dbReference type="RefSeq" id="NP_830035.1">
    <property type="nucleotide sequence ID" value="NC_004722.1"/>
</dbReference>
<dbReference type="RefSeq" id="WP_000090788.1">
    <property type="nucleotide sequence ID" value="NZ_CP138336.1"/>
</dbReference>
<dbReference type="SMR" id="P62175"/>
<dbReference type="STRING" id="226900.BC_0156"/>
<dbReference type="MetOSite" id="P62175"/>
<dbReference type="GeneID" id="93010918"/>
<dbReference type="KEGG" id="bce:BC0156"/>
<dbReference type="PATRIC" id="fig|226900.8.peg.158"/>
<dbReference type="HOGENOM" id="CLU_103849_1_1_9"/>
<dbReference type="OrthoDB" id="9803610at2"/>
<dbReference type="Proteomes" id="UP000001417">
    <property type="component" value="Chromosome"/>
</dbReference>
<dbReference type="GO" id="GO:0005829">
    <property type="term" value="C:cytosol"/>
    <property type="evidence" value="ECO:0000318"/>
    <property type="project" value="GO_Central"/>
</dbReference>
<dbReference type="GO" id="GO:0015935">
    <property type="term" value="C:small ribosomal subunit"/>
    <property type="evidence" value="ECO:0000318"/>
    <property type="project" value="GO_Central"/>
</dbReference>
<dbReference type="GO" id="GO:0019843">
    <property type="term" value="F:rRNA binding"/>
    <property type="evidence" value="ECO:0007669"/>
    <property type="project" value="UniProtKB-UniRule"/>
</dbReference>
<dbReference type="GO" id="GO:0003735">
    <property type="term" value="F:structural constituent of ribosome"/>
    <property type="evidence" value="ECO:0007669"/>
    <property type="project" value="InterPro"/>
</dbReference>
<dbReference type="GO" id="GO:0000049">
    <property type="term" value="F:tRNA binding"/>
    <property type="evidence" value="ECO:0007669"/>
    <property type="project" value="UniProtKB-UniRule"/>
</dbReference>
<dbReference type="GO" id="GO:0006412">
    <property type="term" value="P:translation"/>
    <property type="evidence" value="ECO:0007669"/>
    <property type="project" value="UniProtKB-UniRule"/>
</dbReference>
<dbReference type="FunFam" id="1.10.8.50:FF:000001">
    <property type="entry name" value="30S ribosomal protein S13"/>
    <property type="match status" value="1"/>
</dbReference>
<dbReference type="FunFam" id="4.10.910.10:FF:000001">
    <property type="entry name" value="30S ribosomal protein S13"/>
    <property type="match status" value="1"/>
</dbReference>
<dbReference type="Gene3D" id="1.10.8.50">
    <property type="match status" value="1"/>
</dbReference>
<dbReference type="Gene3D" id="4.10.910.10">
    <property type="entry name" value="30s ribosomal protein s13, domain 2"/>
    <property type="match status" value="1"/>
</dbReference>
<dbReference type="HAMAP" id="MF_01315">
    <property type="entry name" value="Ribosomal_uS13"/>
    <property type="match status" value="1"/>
</dbReference>
<dbReference type="InterPro" id="IPR027437">
    <property type="entry name" value="Rbsml_uS13_C"/>
</dbReference>
<dbReference type="InterPro" id="IPR001892">
    <property type="entry name" value="Ribosomal_uS13"/>
</dbReference>
<dbReference type="InterPro" id="IPR010979">
    <property type="entry name" value="Ribosomal_uS13-like_H2TH"/>
</dbReference>
<dbReference type="InterPro" id="IPR019980">
    <property type="entry name" value="Ribosomal_uS13_bac-type"/>
</dbReference>
<dbReference type="InterPro" id="IPR018269">
    <property type="entry name" value="Ribosomal_uS13_CS"/>
</dbReference>
<dbReference type="NCBIfam" id="TIGR03631">
    <property type="entry name" value="uS13_bact"/>
    <property type="match status" value="1"/>
</dbReference>
<dbReference type="PANTHER" id="PTHR10871">
    <property type="entry name" value="30S RIBOSOMAL PROTEIN S13/40S RIBOSOMAL PROTEIN S18"/>
    <property type="match status" value="1"/>
</dbReference>
<dbReference type="PANTHER" id="PTHR10871:SF1">
    <property type="entry name" value="SMALL RIBOSOMAL SUBUNIT PROTEIN US13M"/>
    <property type="match status" value="1"/>
</dbReference>
<dbReference type="Pfam" id="PF00416">
    <property type="entry name" value="Ribosomal_S13"/>
    <property type="match status" value="1"/>
</dbReference>
<dbReference type="PIRSF" id="PIRSF002134">
    <property type="entry name" value="Ribosomal_S13"/>
    <property type="match status" value="1"/>
</dbReference>
<dbReference type="SUPFAM" id="SSF46946">
    <property type="entry name" value="S13-like H2TH domain"/>
    <property type="match status" value="1"/>
</dbReference>
<dbReference type="PROSITE" id="PS00646">
    <property type="entry name" value="RIBOSOMAL_S13_1"/>
    <property type="match status" value="1"/>
</dbReference>
<dbReference type="PROSITE" id="PS50159">
    <property type="entry name" value="RIBOSOMAL_S13_2"/>
    <property type="match status" value="1"/>
</dbReference>
<proteinExistence type="inferred from homology"/>
<organism>
    <name type="scientific">Bacillus cereus (strain ATCC 14579 / DSM 31 / CCUG 7414 / JCM 2152 / NBRC 15305 / NCIMB 9373 / NCTC 2599 / NRRL B-3711)</name>
    <dbReference type="NCBI Taxonomy" id="226900"/>
    <lineage>
        <taxon>Bacteria</taxon>
        <taxon>Bacillati</taxon>
        <taxon>Bacillota</taxon>
        <taxon>Bacilli</taxon>
        <taxon>Bacillales</taxon>
        <taxon>Bacillaceae</taxon>
        <taxon>Bacillus</taxon>
        <taxon>Bacillus cereus group</taxon>
    </lineage>
</organism>
<feature type="chain" id="PRO_0000132062" description="Small ribosomal subunit protein uS13">
    <location>
        <begin position="1"/>
        <end position="121"/>
    </location>
</feature>
<feature type="region of interest" description="Disordered" evidence="2">
    <location>
        <begin position="91"/>
        <end position="121"/>
    </location>
</feature>
<feature type="compositionally biased region" description="Basic residues" evidence="2">
    <location>
        <begin position="106"/>
        <end position="121"/>
    </location>
</feature>
<accession>P62175</accession>
<accession>P59751</accession>